<name>ALT_BPT2</name>
<feature type="chain" id="PRO_0000460673" description="NAD(+)--arginine ADP-ribosyltransferase" evidence="1">
    <location>
        <begin position="1"/>
        <end position="698"/>
    </location>
</feature>
<feature type="chain" id="PRO_0000164916" description="Mature NAD(+)--arginine ADP-ribosyltransferase" evidence="1">
    <location>
        <begin position="8"/>
        <end position="633"/>
    </location>
</feature>
<feature type="domain" description="TR mART core" evidence="2">
    <location>
        <begin position="375"/>
        <end position="628"/>
    </location>
</feature>
<feature type="active site" evidence="2">
    <location>
        <position position="481"/>
    </location>
</feature>
<feature type="active site" evidence="2">
    <location>
        <position position="506"/>
    </location>
</feature>
<feature type="active site" evidence="2">
    <location>
        <position position="590"/>
    </location>
</feature>
<feature type="site" description="Cleavage" evidence="1">
    <location>
        <begin position="7"/>
        <end position="8"/>
    </location>
</feature>
<feature type="site" description="Cleavage" evidence="1">
    <location>
        <begin position="633"/>
        <end position="634"/>
    </location>
</feature>
<evidence type="ECO:0000255" key="1">
    <source>
        <dbReference type="HAMAP-Rule" id="MF_04139"/>
    </source>
</evidence>
<evidence type="ECO:0000255" key="2">
    <source>
        <dbReference type="PROSITE-ProRule" id="PRU01340"/>
    </source>
</evidence>
<evidence type="ECO:0000303" key="3">
    <source>
    </source>
</evidence>
<reference key="1">
    <citation type="journal article" date="1994" name="Virology">
        <title>The ADP-ribosyltransferases (gpAlt) of bacteriophages T2, T4, and T6: sequencing of the genes and comparison of their products.</title>
        <authorList>
            <person name="Koch T."/>
            <person name="Rueger W."/>
        </authorList>
    </citation>
    <scope>NUCLEOTIDE SEQUENCE [GENOMIC DNA]</scope>
    <scope>IDENTIFICATION</scope>
    <source>
        <strain>WT</strain>
    </source>
</reference>
<protein>
    <recommendedName>
        <fullName evidence="1">NAD(+)--arginine ADP-ribosyltransferase</fullName>
        <ecNumber evidence="1">2.4.2.31</ecNumber>
    </recommendedName>
    <alternativeName>
        <fullName evidence="3">Alt protein</fullName>
    </alternativeName>
    <component>
        <recommendedName>
            <fullName>Mature NAD(+)--arginine ADP-ribosyltransferase</fullName>
        </recommendedName>
    </component>
</protein>
<comment type="function">
    <text evidence="1">ADP-ribosyltransferase that efficiently ADP-ribosylates one of the two alpha subunits of host RNA polymerase RPOA on an arginine located in the C-terminal region. ADP-ribosylation of RPOA alpha subunit enhances the transcription of viral early genes. Also ribosylates RPOA subunits beta, beta' and sigma 70 and performs an autoribosylation reaction.</text>
</comment>
<comment type="catalytic activity">
    <reaction evidence="1">
        <text>L-arginyl-[protein] + NAD(+) = N(omega)-(ADP-D-ribosyl)-L-arginyl-[protein] + nicotinamide + H(+)</text>
        <dbReference type="Rhea" id="RHEA:19149"/>
        <dbReference type="Rhea" id="RHEA-COMP:10532"/>
        <dbReference type="Rhea" id="RHEA-COMP:15087"/>
        <dbReference type="ChEBI" id="CHEBI:15378"/>
        <dbReference type="ChEBI" id="CHEBI:17154"/>
        <dbReference type="ChEBI" id="CHEBI:29965"/>
        <dbReference type="ChEBI" id="CHEBI:57540"/>
        <dbReference type="ChEBI" id="CHEBI:142554"/>
        <dbReference type="EC" id="2.4.2.31"/>
    </reaction>
    <physiologicalReaction direction="left-to-right" evidence="1">
        <dbReference type="Rhea" id="RHEA:19150"/>
    </physiologicalReaction>
</comment>
<comment type="subcellular location">
    <subcellularLocation>
        <location evidence="1">Virion</location>
    </subcellularLocation>
    <text evidence="1">About 25-50 copies per virion. This protein is injected into the bacterial cell along with the viral DNA.</text>
</comment>
<comment type="PTM">
    <text evidence="1">Proteolytic cleavages at the N- and C-termini by the prohead core protein protease give rise to the mature enzyme.</text>
</comment>
<comment type="similarity">
    <text evidence="1">Belongs to the Tevenvirinae NAD(+)--arginine ADP-ribosyltransferase family.</text>
</comment>
<proteinExistence type="inferred from homology"/>
<keyword id="KW-0328">Glycosyltransferase</keyword>
<keyword id="KW-0520">NAD</keyword>
<keyword id="KW-0548">Nucleotidyltransferase</keyword>
<keyword id="KW-0808">Transferase</keyword>
<keyword id="KW-0946">Virion</keyword>
<sequence length="698" mass="77997">MMELITELFDEDTTLPITNLNPKKKIPQIFSVHVDDAIEQPGFRLCTYTSGGDTNRDLKMGDKMMHIVPFTLTAKGSIAKLKGLGPSPINYINSVFTVAMQTMRQYKIDACMLRILKSKTAGQARQIQVIADRLIRSRSGGRYVLLKELWDYDKKYAYILIHRKNVSLEDIPGVPEISTELFTKVESKVGDVYINKDTGAQVTKNEAIAASIAQENDKRTDQAVIVKVKISRRAIAQSQSLESSRFESELFQKYESTAANFNKPATAPLIPEAEEMKIGINSLASKTKAAKIIAEGTANELHYDYKFFSKSEVDEVSEKIKDVIFNAIKNEPTTSIKCLEKYAAAVNQFFEEYKDNWLDKHNKTRKGQPDEVWGEITKNAWNAAKTKFLKRMIYSFSGIGAGPMIDITIACDGSKYTPSQKRGIREYCGSGYTDINNLLLGRYNPERYDVMSEKEIESAINNLDSAFENGDRIPEGITVYRAQSMTAPIYEALVKNKVFYFRNFVSTSLTPIIFGRFGITHAGIGLLEPEARNELTVDKNEEGITINPNEIRAYKENPEYVKVQIGWAIDGAHKVNVVYPGSLGIATEAEVILPRGLMVKVNKITDASNNDGTTSNNTKLIQAEVMTTEELTESVIYDGDRLMETGEVVAMTGDIEIEDRVDFASFVSSNVKQKVESSLGIIASCIDITNMPYKFVQG</sequence>
<gene>
    <name type="primary">alt</name>
</gene>
<organismHost>
    <name type="scientific">Escherichia coli</name>
    <dbReference type="NCBI Taxonomy" id="562"/>
</organismHost>
<dbReference type="EC" id="2.4.2.31" evidence="1"/>
<dbReference type="EMBL" id="X69893">
    <property type="protein sequence ID" value="CAA49517.1"/>
    <property type="molecule type" value="Genomic_DNA"/>
</dbReference>
<dbReference type="PIR" id="S31630">
    <property type="entry name" value="S31630"/>
</dbReference>
<dbReference type="GO" id="GO:0005576">
    <property type="term" value="C:extracellular region"/>
    <property type="evidence" value="ECO:0007669"/>
    <property type="project" value="InterPro"/>
</dbReference>
<dbReference type="GO" id="GO:0044423">
    <property type="term" value="C:virion component"/>
    <property type="evidence" value="ECO:0007669"/>
    <property type="project" value="UniProtKB-UniRule"/>
</dbReference>
<dbReference type="GO" id="GO:0106274">
    <property type="term" value="F:NAD+-protein-arginine ADP-ribosyltransferase activity"/>
    <property type="evidence" value="ECO:0007669"/>
    <property type="project" value="UniProtKB-UniRule"/>
</dbReference>
<dbReference type="GO" id="GO:0016779">
    <property type="term" value="F:nucleotidyltransferase activity"/>
    <property type="evidence" value="ECO:0007669"/>
    <property type="project" value="UniProtKB-KW"/>
</dbReference>
<dbReference type="GO" id="GO:0046782">
    <property type="term" value="P:regulation of viral transcription"/>
    <property type="evidence" value="ECO:0007669"/>
    <property type="project" value="UniProtKB-UniRule"/>
</dbReference>
<dbReference type="CDD" id="cd00233">
    <property type="entry name" value="VIP2"/>
    <property type="match status" value="1"/>
</dbReference>
<dbReference type="Gene3D" id="3.90.176.10">
    <property type="entry name" value="Toxin ADP-ribosyltransferase, Chain A, domain 1"/>
    <property type="match status" value="1"/>
</dbReference>
<dbReference type="HAMAP" id="MF_04139">
    <property type="entry name" value="ALT_T4"/>
    <property type="match status" value="1"/>
</dbReference>
<dbReference type="InterPro" id="IPR003540">
    <property type="entry name" value="ADP-ribosyltransferase"/>
</dbReference>
<dbReference type="InterPro" id="IPR016225">
    <property type="entry name" value="Phage_T4_Alt-like"/>
</dbReference>
<dbReference type="Pfam" id="PF03496">
    <property type="entry name" value="ADPrib_exo_Tox"/>
    <property type="match status" value="1"/>
</dbReference>
<dbReference type="PIRSF" id="PIRSF000491">
    <property type="entry name" value="Alt_phage"/>
    <property type="match status" value="1"/>
</dbReference>
<dbReference type="SUPFAM" id="SSF56399">
    <property type="entry name" value="ADP-ribosylation"/>
    <property type="match status" value="1"/>
</dbReference>
<dbReference type="PROSITE" id="PS51996">
    <property type="entry name" value="TR_MART"/>
    <property type="match status" value="1"/>
</dbReference>
<organism>
    <name type="scientific">Enterobacteria phage T2</name>
    <name type="common">Bacteriophage T2</name>
    <dbReference type="NCBI Taxonomy" id="2060721"/>
    <lineage>
        <taxon>Viruses</taxon>
        <taxon>Duplodnaviria</taxon>
        <taxon>Heunggongvirae</taxon>
        <taxon>Uroviricota</taxon>
        <taxon>Caudoviricetes</taxon>
        <taxon>Straboviridae</taxon>
        <taxon>Tevenvirinae</taxon>
        <taxon>Tequatrovirus</taxon>
        <taxon>Tequatrovirus T2</taxon>
    </lineage>
</organism>
<accession>Q38424</accession>